<protein>
    <recommendedName>
        <fullName evidence="1">tRNA pseudouridine synthase D</fullName>
        <ecNumber evidence="1">5.4.99.27</ecNumber>
    </recommendedName>
    <alternativeName>
        <fullName evidence="1">tRNA pseudouridine(13) synthase</fullName>
    </alternativeName>
    <alternativeName>
        <fullName evidence="1">tRNA pseudouridylate synthase D</fullName>
    </alternativeName>
    <alternativeName>
        <fullName evidence="1">tRNA-uridine isomerase D</fullName>
    </alternativeName>
</protein>
<sequence length="385" mass="45775">MDIRIKEKPEEFYVKEIKKLDLKEKGQYAYFLLKKKDMTTLDAVRHISHRFGIPLKNIGFAGLKDKKAVTEQYISVKDLNEEKIRKMDGYRTENLELKFLGFSDKGLELGEIEGNYFEVVVRGVTKYHRRVFPRMKELVENYGCENYFGEQRFGSVKHAEEFIVKYLLRHEYEEAMKEYLTSLGDKRLKRLLRKAWRDWDRFLSLMPKGAKPELEVVKALRRGESFKNAFMVLPKNIRLMFVFAYQSYLWNRYLYTFVVRYLKYCKTPFLKWELAFFNDMSEVIWEEIKDLEIPYLGVEYKPRNKKAEIVMKEVLQDEGITPKMLMAERIGIKLFSDGVRKAFFKPQGLKVIEERKNSLKLSFTLPPGSYATILLRKLFCSDVKS</sequence>
<feature type="chain" id="PRO_0000152491" description="tRNA pseudouridine synthase D">
    <location>
        <begin position="1"/>
        <end position="385"/>
    </location>
</feature>
<feature type="domain" description="TRUD" evidence="1">
    <location>
        <begin position="143"/>
        <end position="345"/>
    </location>
</feature>
<feature type="active site" description="Nucleophile" evidence="1">
    <location>
        <position position="65"/>
    </location>
</feature>
<dbReference type="EC" id="5.4.99.27" evidence="1"/>
<dbReference type="EMBL" id="AE000657">
    <property type="protein sequence ID" value="AAC07586.1"/>
    <property type="molecule type" value="Genomic_DNA"/>
</dbReference>
<dbReference type="PIR" id="F70448">
    <property type="entry name" value="F70448"/>
</dbReference>
<dbReference type="RefSeq" id="NP_214182.1">
    <property type="nucleotide sequence ID" value="NC_000918.1"/>
</dbReference>
<dbReference type="RefSeq" id="WP_010881119.1">
    <property type="nucleotide sequence ID" value="NC_000918.1"/>
</dbReference>
<dbReference type="SMR" id="O67616"/>
<dbReference type="STRING" id="224324.aq_1723"/>
<dbReference type="EnsemblBacteria" id="AAC07586">
    <property type="protein sequence ID" value="AAC07586"/>
    <property type="gene ID" value="aq_1723"/>
</dbReference>
<dbReference type="KEGG" id="aae:aq_1723"/>
<dbReference type="PATRIC" id="fig|224324.8.peg.1324"/>
<dbReference type="eggNOG" id="COG0585">
    <property type="taxonomic scope" value="Bacteria"/>
</dbReference>
<dbReference type="HOGENOM" id="CLU_005281_4_1_0"/>
<dbReference type="InParanoid" id="O67616"/>
<dbReference type="OrthoDB" id="1550679at2"/>
<dbReference type="Proteomes" id="UP000000798">
    <property type="component" value="Chromosome"/>
</dbReference>
<dbReference type="GO" id="GO:0009982">
    <property type="term" value="F:pseudouridine synthase activity"/>
    <property type="evidence" value="ECO:0000318"/>
    <property type="project" value="GO_Central"/>
</dbReference>
<dbReference type="GO" id="GO:0003723">
    <property type="term" value="F:RNA binding"/>
    <property type="evidence" value="ECO:0007669"/>
    <property type="project" value="InterPro"/>
</dbReference>
<dbReference type="GO" id="GO:0160150">
    <property type="term" value="F:tRNA pseudouridine(13) synthase activity"/>
    <property type="evidence" value="ECO:0007669"/>
    <property type="project" value="UniProtKB-EC"/>
</dbReference>
<dbReference type="GO" id="GO:0001522">
    <property type="term" value="P:pseudouridine synthesis"/>
    <property type="evidence" value="ECO:0000318"/>
    <property type="project" value="GO_Central"/>
</dbReference>
<dbReference type="GO" id="GO:0031119">
    <property type="term" value="P:tRNA pseudouridine synthesis"/>
    <property type="evidence" value="ECO:0007669"/>
    <property type="project" value="UniProtKB-UniRule"/>
</dbReference>
<dbReference type="CDD" id="cd02577">
    <property type="entry name" value="PSTD1"/>
    <property type="match status" value="1"/>
</dbReference>
<dbReference type="Gene3D" id="3.30.2350.20">
    <property type="entry name" value="TruD, catalytic domain"/>
    <property type="match status" value="2"/>
</dbReference>
<dbReference type="HAMAP" id="MF_01082">
    <property type="entry name" value="TruD"/>
    <property type="match status" value="1"/>
</dbReference>
<dbReference type="InterPro" id="IPR020103">
    <property type="entry name" value="PsdUridine_synth_cat_dom_sf"/>
</dbReference>
<dbReference type="InterPro" id="IPR001656">
    <property type="entry name" value="PsdUridine_synth_TruD"/>
</dbReference>
<dbReference type="InterPro" id="IPR020119">
    <property type="entry name" value="PsdUridine_synth_TruD_CS"/>
</dbReference>
<dbReference type="InterPro" id="IPR011760">
    <property type="entry name" value="PsdUridine_synth_TruD_insert"/>
</dbReference>
<dbReference type="InterPro" id="IPR042214">
    <property type="entry name" value="TruD_catalytic"/>
</dbReference>
<dbReference type="NCBIfam" id="NF002160">
    <property type="entry name" value="PRK00984.2-5"/>
    <property type="match status" value="1"/>
</dbReference>
<dbReference type="NCBIfam" id="TIGR00094">
    <property type="entry name" value="tRNA_TruD_broad"/>
    <property type="match status" value="1"/>
</dbReference>
<dbReference type="PANTHER" id="PTHR13326:SF21">
    <property type="entry name" value="PSEUDOURIDYLATE SYNTHASE PUS7L"/>
    <property type="match status" value="1"/>
</dbReference>
<dbReference type="PANTHER" id="PTHR13326">
    <property type="entry name" value="TRNA PSEUDOURIDINE SYNTHASE D"/>
    <property type="match status" value="1"/>
</dbReference>
<dbReference type="Pfam" id="PF01142">
    <property type="entry name" value="TruD"/>
    <property type="match status" value="1"/>
</dbReference>
<dbReference type="PIRSF" id="PIRSF037016">
    <property type="entry name" value="Pseudouridin_synth_euk_prd"/>
    <property type="match status" value="1"/>
</dbReference>
<dbReference type="SUPFAM" id="SSF55120">
    <property type="entry name" value="Pseudouridine synthase"/>
    <property type="match status" value="1"/>
</dbReference>
<dbReference type="PROSITE" id="PS50984">
    <property type="entry name" value="TRUD"/>
    <property type="match status" value="1"/>
</dbReference>
<dbReference type="PROSITE" id="PS01268">
    <property type="entry name" value="UPF0024"/>
    <property type="match status" value="1"/>
</dbReference>
<comment type="function">
    <text evidence="1">Responsible for synthesis of pseudouridine from uracil-13 in transfer RNAs.</text>
</comment>
<comment type="catalytic activity">
    <reaction evidence="1">
        <text>uridine(13) in tRNA = pseudouridine(13) in tRNA</text>
        <dbReference type="Rhea" id="RHEA:42540"/>
        <dbReference type="Rhea" id="RHEA-COMP:10105"/>
        <dbReference type="Rhea" id="RHEA-COMP:10106"/>
        <dbReference type="ChEBI" id="CHEBI:65314"/>
        <dbReference type="ChEBI" id="CHEBI:65315"/>
        <dbReference type="EC" id="5.4.99.27"/>
    </reaction>
</comment>
<comment type="similarity">
    <text evidence="1">Belongs to the pseudouridine synthase TruD family.</text>
</comment>
<organism>
    <name type="scientific">Aquifex aeolicus (strain VF5)</name>
    <dbReference type="NCBI Taxonomy" id="224324"/>
    <lineage>
        <taxon>Bacteria</taxon>
        <taxon>Pseudomonadati</taxon>
        <taxon>Aquificota</taxon>
        <taxon>Aquificia</taxon>
        <taxon>Aquificales</taxon>
        <taxon>Aquificaceae</taxon>
        <taxon>Aquifex</taxon>
    </lineage>
</organism>
<name>TRUD_AQUAE</name>
<accession>O67616</accession>
<proteinExistence type="inferred from homology"/>
<gene>
    <name evidence="1" type="primary">truD</name>
    <name type="ordered locus">aq_1723</name>
</gene>
<reference key="1">
    <citation type="journal article" date="1998" name="Nature">
        <title>The complete genome of the hyperthermophilic bacterium Aquifex aeolicus.</title>
        <authorList>
            <person name="Deckert G."/>
            <person name="Warren P.V."/>
            <person name="Gaasterland T."/>
            <person name="Young W.G."/>
            <person name="Lenox A.L."/>
            <person name="Graham D.E."/>
            <person name="Overbeek R."/>
            <person name="Snead M.A."/>
            <person name="Keller M."/>
            <person name="Aujay M."/>
            <person name="Huber R."/>
            <person name="Feldman R.A."/>
            <person name="Short J.M."/>
            <person name="Olsen G.J."/>
            <person name="Swanson R.V."/>
        </authorList>
    </citation>
    <scope>NUCLEOTIDE SEQUENCE [LARGE SCALE GENOMIC DNA]</scope>
    <source>
        <strain>VF5</strain>
    </source>
</reference>
<keyword id="KW-0413">Isomerase</keyword>
<keyword id="KW-1185">Reference proteome</keyword>
<keyword id="KW-0819">tRNA processing</keyword>
<evidence type="ECO:0000255" key="1">
    <source>
        <dbReference type="HAMAP-Rule" id="MF_01082"/>
    </source>
</evidence>